<organism>
    <name type="scientific">Bacillus subtilis (strain 168)</name>
    <dbReference type="NCBI Taxonomy" id="224308"/>
    <lineage>
        <taxon>Bacteria</taxon>
        <taxon>Bacillati</taxon>
        <taxon>Bacillota</taxon>
        <taxon>Bacilli</taxon>
        <taxon>Bacillales</taxon>
        <taxon>Bacillaceae</taxon>
        <taxon>Bacillus</taxon>
    </lineage>
</organism>
<accession>O34476</accession>
<sequence>MLKIVANTADLIGDTPLVRLNRLQPENAAQVYLKLEFFNPSGSVKDRAAYQMIIEAEQNGLLKPGSVIIEPTSGNTGIGLAMNAAARGYKAILVMPDTMTKERINLLKAYGAEVVLTPGEERMPGSIKKAKELAEQIPNSYIPMQFDNTANPDAHRKTTAPEIARAIEEIGKPLGAFVASSGTGGTITGTGEALKELFPDITVHVVEPAGSPVLSGGKPGAHKLVGTSPGFIPPILNEDVYDEIIKISDEDAYTTTRRLAAEEGILVGPSSGAACFAAIETAKRLSPDKVVVCMTADTGERYLSTDLWSFI</sequence>
<proteinExistence type="inferred from homology"/>
<comment type="catalytic activity">
    <reaction>
        <text>O-acetyl-L-serine + hydrogen sulfide = L-cysteine + acetate</text>
        <dbReference type="Rhea" id="RHEA:14829"/>
        <dbReference type="ChEBI" id="CHEBI:29919"/>
        <dbReference type="ChEBI" id="CHEBI:30089"/>
        <dbReference type="ChEBI" id="CHEBI:35235"/>
        <dbReference type="ChEBI" id="CHEBI:58340"/>
        <dbReference type="EC" id="2.5.1.47"/>
    </reaction>
</comment>
<comment type="cofactor">
    <cofactor evidence="1">
        <name>pyridoxal 5'-phosphate</name>
        <dbReference type="ChEBI" id="CHEBI:597326"/>
    </cofactor>
</comment>
<comment type="pathway">
    <text>Amino-acid biosynthesis; L-cysteine biosynthesis; L-cysteine from L-serine: step 2/2.</text>
</comment>
<comment type="similarity">
    <text evidence="2">Belongs to the cysteine synthase/cystathionine beta-synthase family.</text>
</comment>
<reference key="1">
    <citation type="journal article" date="1997" name="Microbiology">
        <title>Sequencing and functional annotation of the Bacillus subtilis genes in the 200 kb rrnB-dnaB region.</title>
        <authorList>
            <person name="Lapidus A."/>
            <person name="Galleron N."/>
            <person name="Sorokin A."/>
            <person name="Ehrlich S.D."/>
        </authorList>
    </citation>
    <scope>NUCLEOTIDE SEQUENCE [GENOMIC DNA]</scope>
    <source>
        <strain>168</strain>
    </source>
</reference>
<reference key="2">
    <citation type="journal article" date="1997" name="Nature">
        <title>The complete genome sequence of the Gram-positive bacterium Bacillus subtilis.</title>
        <authorList>
            <person name="Kunst F."/>
            <person name="Ogasawara N."/>
            <person name="Moszer I."/>
            <person name="Albertini A.M."/>
            <person name="Alloni G."/>
            <person name="Azevedo V."/>
            <person name="Bertero M.G."/>
            <person name="Bessieres P."/>
            <person name="Bolotin A."/>
            <person name="Borchert S."/>
            <person name="Borriss R."/>
            <person name="Boursier L."/>
            <person name="Brans A."/>
            <person name="Braun M."/>
            <person name="Brignell S.C."/>
            <person name="Bron S."/>
            <person name="Brouillet S."/>
            <person name="Bruschi C.V."/>
            <person name="Caldwell B."/>
            <person name="Capuano V."/>
            <person name="Carter N.M."/>
            <person name="Choi S.-K."/>
            <person name="Codani J.-J."/>
            <person name="Connerton I.F."/>
            <person name="Cummings N.J."/>
            <person name="Daniel R.A."/>
            <person name="Denizot F."/>
            <person name="Devine K.M."/>
            <person name="Duesterhoeft A."/>
            <person name="Ehrlich S.D."/>
            <person name="Emmerson P.T."/>
            <person name="Entian K.-D."/>
            <person name="Errington J."/>
            <person name="Fabret C."/>
            <person name="Ferrari E."/>
            <person name="Foulger D."/>
            <person name="Fritz C."/>
            <person name="Fujita M."/>
            <person name="Fujita Y."/>
            <person name="Fuma S."/>
            <person name="Galizzi A."/>
            <person name="Galleron N."/>
            <person name="Ghim S.-Y."/>
            <person name="Glaser P."/>
            <person name="Goffeau A."/>
            <person name="Golightly E.J."/>
            <person name="Grandi G."/>
            <person name="Guiseppi G."/>
            <person name="Guy B.J."/>
            <person name="Haga K."/>
            <person name="Haiech J."/>
            <person name="Harwood C.R."/>
            <person name="Henaut A."/>
            <person name="Hilbert H."/>
            <person name="Holsappel S."/>
            <person name="Hosono S."/>
            <person name="Hullo M.-F."/>
            <person name="Itaya M."/>
            <person name="Jones L.-M."/>
            <person name="Joris B."/>
            <person name="Karamata D."/>
            <person name="Kasahara Y."/>
            <person name="Klaerr-Blanchard M."/>
            <person name="Klein C."/>
            <person name="Kobayashi Y."/>
            <person name="Koetter P."/>
            <person name="Koningstein G."/>
            <person name="Krogh S."/>
            <person name="Kumano M."/>
            <person name="Kurita K."/>
            <person name="Lapidus A."/>
            <person name="Lardinois S."/>
            <person name="Lauber J."/>
            <person name="Lazarevic V."/>
            <person name="Lee S.-M."/>
            <person name="Levine A."/>
            <person name="Liu H."/>
            <person name="Masuda S."/>
            <person name="Mauel C."/>
            <person name="Medigue C."/>
            <person name="Medina N."/>
            <person name="Mellado R.P."/>
            <person name="Mizuno M."/>
            <person name="Moestl D."/>
            <person name="Nakai S."/>
            <person name="Noback M."/>
            <person name="Noone D."/>
            <person name="O'Reilly M."/>
            <person name="Ogawa K."/>
            <person name="Ogiwara A."/>
            <person name="Oudega B."/>
            <person name="Park S.-H."/>
            <person name="Parro V."/>
            <person name="Pohl T.M."/>
            <person name="Portetelle D."/>
            <person name="Porwollik S."/>
            <person name="Prescott A.M."/>
            <person name="Presecan E."/>
            <person name="Pujic P."/>
            <person name="Purnelle B."/>
            <person name="Rapoport G."/>
            <person name="Rey M."/>
            <person name="Reynolds S."/>
            <person name="Rieger M."/>
            <person name="Rivolta C."/>
            <person name="Rocha E."/>
            <person name="Roche B."/>
            <person name="Rose M."/>
            <person name="Sadaie Y."/>
            <person name="Sato T."/>
            <person name="Scanlan E."/>
            <person name="Schleich S."/>
            <person name="Schroeter R."/>
            <person name="Scoffone F."/>
            <person name="Sekiguchi J."/>
            <person name="Sekowska A."/>
            <person name="Seror S.J."/>
            <person name="Serror P."/>
            <person name="Shin B.-S."/>
            <person name="Soldo B."/>
            <person name="Sorokin A."/>
            <person name="Tacconi E."/>
            <person name="Takagi T."/>
            <person name="Takahashi H."/>
            <person name="Takemaru K."/>
            <person name="Takeuchi M."/>
            <person name="Tamakoshi A."/>
            <person name="Tanaka T."/>
            <person name="Terpstra P."/>
            <person name="Tognoni A."/>
            <person name="Tosato V."/>
            <person name="Uchiyama S."/>
            <person name="Vandenbol M."/>
            <person name="Vannier F."/>
            <person name="Vassarotti A."/>
            <person name="Viari A."/>
            <person name="Wambutt R."/>
            <person name="Wedler E."/>
            <person name="Wedler H."/>
            <person name="Weitzenegger T."/>
            <person name="Winters P."/>
            <person name="Wipat A."/>
            <person name="Yamamoto H."/>
            <person name="Yamane K."/>
            <person name="Yasumoto K."/>
            <person name="Yata K."/>
            <person name="Yoshida K."/>
            <person name="Yoshikawa H.-F."/>
            <person name="Zumstein E."/>
            <person name="Yoshikawa H."/>
            <person name="Danchin A."/>
        </authorList>
    </citation>
    <scope>NUCLEOTIDE SEQUENCE [LARGE SCALE GENOMIC DNA]</scope>
    <source>
        <strain>168</strain>
    </source>
</reference>
<keyword id="KW-0028">Amino-acid biosynthesis</keyword>
<keyword id="KW-0198">Cysteine biosynthesis</keyword>
<keyword id="KW-0663">Pyridoxal phosphate</keyword>
<keyword id="KW-1185">Reference proteome</keyword>
<keyword id="KW-0808">Transferase</keyword>
<gene>
    <name type="primary">ytkP</name>
    <name type="ordered locus">BSU29970</name>
</gene>
<dbReference type="EC" id="2.5.1.47"/>
<dbReference type="EMBL" id="AF008220">
    <property type="protein sequence ID" value="AAC00392.1"/>
    <property type="molecule type" value="Genomic_DNA"/>
</dbReference>
<dbReference type="EMBL" id="AL009126">
    <property type="protein sequence ID" value="CAB14975.1"/>
    <property type="molecule type" value="Genomic_DNA"/>
</dbReference>
<dbReference type="PIR" id="H69994">
    <property type="entry name" value="H69994"/>
</dbReference>
<dbReference type="RefSeq" id="NP_390875.1">
    <property type="nucleotide sequence ID" value="NC_000964.3"/>
</dbReference>
<dbReference type="SMR" id="O34476"/>
<dbReference type="FunCoup" id="O34476">
    <property type="interactions" value="652"/>
</dbReference>
<dbReference type="STRING" id="224308.BSU29970"/>
<dbReference type="PaxDb" id="224308-BSU29970"/>
<dbReference type="EnsemblBacteria" id="CAB14975">
    <property type="protein sequence ID" value="CAB14975"/>
    <property type="gene ID" value="BSU_29970"/>
</dbReference>
<dbReference type="GeneID" id="936733"/>
<dbReference type="KEGG" id="bsu:BSU29970"/>
<dbReference type="PATRIC" id="fig|224308.179.peg.3255"/>
<dbReference type="eggNOG" id="COG0031">
    <property type="taxonomic scope" value="Bacteria"/>
</dbReference>
<dbReference type="InParanoid" id="O34476"/>
<dbReference type="OrthoDB" id="9808024at2"/>
<dbReference type="PhylomeDB" id="O34476"/>
<dbReference type="BioCyc" id="BSUB:BSU29970-MONOMER"/>
<dbReference type="UniPathway" id="UPA00136">
    <property type="reaction ID" value="UER00200"/>
</dbReference>
<dbReference type="Proteomes" id="UP000001570">
    <property type="component" value="Chromosome"/>
</dbReference>
<dbReference type="GO" id="GO:0005737">
    <property type="term" value="C:cytoplasm"/>
    <property type="evidence" value="ECO:0000318"/>
    <property type="project" value="GO_Central"/>
</dbReference>
<dbReference type="GO" id="GO:0004124">
    <property type="term" value="F:cysteine synthase activity"/>
    <property type="evidence" value="ECO:0000318"/>
    <property type="project" value="GO_Central"/>
</dbReference>
<dbReference type="GO" id="GO:0080146">
    <property type="term" value="F:L-cysteine desulfhydrase activity"/>
    <property type="evidence" value="ECO:0000318"/>
    <property type="project" value="GO_Central"/>
</dbReference>
<dbReference type="GO" id="GO:0006535">
    <property type="term" value="P:cysteine biosynthetic process from serine"/>
    <property type="evidence" value="ECO:0000318"/>
    <property type="project" value="GO_Central"/>
</dbReference>
<dbReference type="CDD" id="cd01561">
    <property type="entry name" value="CBS_like"/>
    <property type="match status" value="1"/>
</dbReference>
<dbReference type="FunFam" id="3.40.50.1100:FF:000006">
    <property type="entry name" value="Cysteine synthase"/>
    <property type="match status" value="1"/>
</dbReference>
<dbReference type="Gene3D" id="3.40.50.1100">
    <property type="match status" value="2"/>
</dbReference>
<dbReference type="InterPro" id="IPR005856">
    <property type="entry name" value="Cys_synth"/>
</dbReference>
<dbReference type="InterPro" id="IPR050214">
    <property type="entry name" value="Cys_Synth/Cystath_Beta-Synth"/>
</dbReference>
<dbReference type="InterPro" id="IPR005859">
    <property type="entry name" value="CysK"/>
</dbReference>
<dbReference type="InterPro" id="IPR001216">
    <property type="entry name" value="P-phosphate_BS"/>
</dbReference>
<dbReference type="InterPro" id="IPR001926">
    <property type="entry name" value="TrpB-like_PALP"/>
</dbReference>
<dbReference type="InterPro" id="IPR036052">
    <property type="entry name" value="TrpB-like_PALP_sf"/>
</dbReference>
<dbReference type="NCBIfam" id="TIGR01139">
    <property type="entry name" value="cysK"/>
    <property type="match status" value="1"/>
</dbReference>
<dbReference type="NCBIfam" id="TIGR01136">
    <property type="entry name" value="cysKM"/>
    <property type="match status" value="1"/>
</dbReference>
<dbReference type="PANTHER" id="PTHR10314">
    <property type="entry name" value="CYSTATHIONINE BETA-SYNTHASE"/>
    <property type="match status" value="1"/>
</dbReference>
<dbReference type="Pfam" id="PF00291">
    <property type="entry name" value="PALP"/>
    <property type="match status" value="1"/>
</dbReference>
<dbReference type="SUPFAM" id="SSF53686">
    <property type="entry name" value="Tryptophan synthase beta subunit-like PLP-dependent enzymes"/>
    <property type="match status" value="1"/>
</dbReference>
<dbReference type="PROSITE" id="PS00901">
    <property type="entry name" value="CYS_SYNTHASE"/>
    <property type="match status" value="1"/>
</dbReference>
<evidence type="ECO:0000250" key="1"/>
<evidence type="ECO:0000305" key="2"/>
<protein>
    <recommendedName>
        <fullName>Probable cysteine synthase</fullName>
        <shortName>CSase</shortName>
        <ecNumber>2.5.1.47</ecNumber>
    </recommendedName>
    <alternativeName>
        <fullName>O-acetylserine (thiol)-lyase</fullName>
        <shortName>OAS-TL</shortName>
    </alternativeName>
    <alternativeName>
        <fullName>O-acetylserine sulfhydrylase</fullName>
    </alternativeName>
</protein>
<name>CYSM_BACSU</name>
<feature type="chain" id="PRO_0000167082" description="Probable cysteine synthase">
    <location>
        <begin position="1"/>
        <end position="311"/>
    </location>
</feature>
<feature type="binding site" evidence="1">
    <location>
        <position position="75"/>
    </location>
    <ligand>
        <name>pyridoxal 5'-phosphate</name>
        <dbReference type="ChEBI" id="CHEBI:597326"/>
    </ligand>
</feature>
<feature type="binding site" evidence="1">
    <location>
        <begin position="182"/>
        <end position="186"/>
    </location>
    <ligand>
        <name>pyridoxal 5'-phosphate</name>
        <dbReference type="ChEBI" id="CHEBI:597326"/>
    </ligand>
</feature>
<feature type="binding site" evidence="1">
    <location>
        <position position="270"/>
    </location>
    <ligand>
        <name>pyridoxal 5'-phosphate</name>
        <dbReference type="ChEBI" id="CHEBI:597326"/>
    </ligand>
</feature>
<feature type="modified residue" description="N6-(pyridoxal phosphate)lysine" evidence="1">
    <location>
        <position position="45"/>
    </location>
</feature>